<reference key="1">
    <citation type="submission" date="2005-01" db="EMBL/GenBank/DDBJ databases">
        <title>A superfamily of membrane-associated DHHC type zinc finger proteins.</title>
        <authorList>
            <person name="Huang C.-H."/>
            <person name="Chen Y."/>
            <person name="Ye T."/>
        </authorList>
    </citation>
    <scope>NUCLEOTIDE SEQUENCE [MRNA]</scope>
</reference>
<reference key="2">
    <citation type="journal article" date="2019" name="J. Cell Sci.">
        <title>Regulation of dendrite morphology and excitatory synapse formation by zDHHC15.</title>
        <authorList>
            <person name="Shah B.S."/>
            <person name="Shimell J.J."/>
            <person name="Bamji S.X."/>
        </authorList>
    </citation>
    <scope>FUNCTION</scope>
    <scope>CATALYTIC ACTIVITY</scope>
    <scope>SUBCELLULAR LOCATION</scope>
    <scope>TISSUE SPECIFICITY</scope>
    <scope>DEVELOPMENTAL STAGE</scope>
    <scope>ACTIVE SITE</scope>
    <scope>MUTAGENESIS OF CYS-159</scope>
</reference>
<accession>Q2TGJ4</accession>
<proteinExistence type="evidence at protein level"/>
<sequence length="337" mass="39308">MRRGWKMALSGGLRCCRRVLSWVPVLVIVLVVLWSYYAYVFELCLVTVLSPAEKVIYLILYHAIFVFFAWTYWKSIFTLPQQPNQKFHLSYTDKERYKNEERPEVQKQMLVDMAKKLPVYTRTGNGAVRFCDRCHLIKPDRCHHCSVCAMCVLKMDHHCPWVNNCIGFSNYKFFLQFLAYSVLYCLYIATTVFSYFIKYWRGELPSVRSKFHVLFLLFVACMFFVSLVILFGYHCWLVSRNKTTLEAFCTPVFTSGPEKNGFNLGFIKNIQQVFGDNKKFWLIPIGSSPGDGHSFPMRSMNESQNPLLANEEPWEDNEDESQDYPEGLSSLAVESET</sequence>
<feature type="chain" id="PRO_0000232504" description="Palmitoyltransferase ZDHHC15">
    <location>
        <begin position="1"/>
        <end position="337"/>
    </location>
</feature>
<feature type="topological domain" description="Cytoplasmic" evidence="1">
    <location>
        <begin position="1"/>
        <end position="20"/>
    </location>
</feature>
<feature type="transmembrane region" description="Helical" evidence="1">
    <location>
        <begin position="21"/>
        <end position="41"/>
    </location>
</feature>
<feature type="topological domain" description="Lumenal" evidence="1">
    <location>
        <begin position="42"/>
        <end position="56"/>
    </location>
</feature>
<feature type="transmembrane region" description="Helical" evidence="1">
    <location>
        <begin position="57"/>
        <end position="77"/>
    </location>
</feature>
<feature type="topological domain" description="Cytoplasmic" evidence="1">
    <location>
        <begin position="78"/>
        <end position="172"/>
    </location>
</feature>
<feature type="transmembrane region" description="Helical" evidence="1">
    <location>
        <begin position="173"/>
        <end position="193"/>
    </location>
</feature>
<feature type="topological domain" description="Lumenal" evidence="1">
    <location>
        <begin position="194"/>
        <end position="210"/>
    </location>
</feature>
<feature type="transmembrane region" description="Helical" evidence="1">
    <location>
        <begin position="211"/>
        <end position="234"/>
    </location>
</feature>
<feature type="topological domain" description="Cytoplasmic" evidence="1">
    <location>
        <begin position="235"/>
        <end position="337"/>
    </location>
</feature>
<feature type="domain" description="DHHC" evidence="4">
    <location>
        <begin position="129"/>
        <end position="179"/>
    </location>
</feature>
<feature type="region of interest" description="Disordered" evidence="5">
    <location>
        <begin position="293"/>
        <end position="337"/>
    </location>
</feature>
<feature type="compositionally biased region" description="Acidic residues" evidence="5">
    <location>
        <begin position="312"/>
        <end position="323"/>
    </location>
</feature>
<feature type="active site" description="S-palmitoyl cysteine intermediate" evidence="4 8">
    <location>
        <position position="159"/>
    </location>
</feature>
<feature type="binding site" evidence="1">
    <location>
        <position position="131"/>
    </location>
    <ligand>
        <name>Zn(2+)</name>
        <dbReference type="ChEBI" id="CHEBI:29105"/>
        <label>1</label>
    </ligand>
</feature>
<feature type="binding site" evidence="1">
    <location>
        <position position="134"/>
    </location>
    <ligand>
        <name>Zn(2+)</name>
        <dbReference type="ChEBI" id="CHEBI:29105"/>
        <label>1</label>
    </ligand>
</feature>
<feature type="binding site" evidence="1">
    <location>
        <position position="144"/>
    </location>
    <ligand>
        <name>Zn(2+)</name>
        <dbReference type="ChEBI" id="CHEBI:29105"/>
        <label>1</label>
    </ligand>
</feature>
<feature type="binding site" evidence="1">
    <location>
        <position position="145"/>
    </location>
    <ligand>
        <name>Zn(2+)</name>
        <dbReference type="ChEBI" id="CHEBI:29105"/>
        <label>2</label>
    </ligand>
</feature>
<feature type="binding site" evidence="1">
    <location>
        <position position="148"/>
    </location>
    <ligand>
        <name>Zn(2+)</name>
        <dbReference type="ChEBI" id="CHEBI:29105"/>
        <label>2</label>
    </ligand>
</feature>
<feature type="binding site" evidence="1">
    <location>
        <position position="151"/>
    </location>
    <ligand>
        <name>Zn(2+)</name>
        <dbReference type="ChEBI" id="CHEBI:29105"/>
        <label>1</label>
    </ligand>
</feature>
<feature type="binding site" evidence="1">
    <location>
        <position position="158"/>
    </location>
    <ligand>
        <name>Zn(2+)</name>
        <dbReference type="ChEBI" id="CHEBI:29105"/>
        <label>2</label>
    </ligand>
</feature>
<feature type="binding site" evidence="1">
    <location>
        <position position="165"/>
    </location>
    <ligand>
        <name>Zn(2+)</name>
        <dbReference type="ChEBI" id="CHEBI:29105"/>
        <label>2</label>
    </ligand>
</feature>
<feature type="mutagenesis site" description="Loss of function in dendrite development." evidence="6">
    <original>C</original>
    <variation>S</variation>
    <location>
        <position position="159"/>
    </location>
</feature>
<comment type="function">
    <text evidence="1 2 3 6">Palmitoyltransferase that catalyzes the addition of palmitate onto various protein substrates (By similarity). Has no stringent fatty acid selectivity and in addition to palmitate can also transfer onto target proteins myristate from tetradecanoyl-CoA and stearate from octadecanoyl-CoA (By similarity). Palmitoylates IGF2R and SORT1, promoting their partitioning to an endosomal membrane subdomain where they can interact with the retromer cargo-selective complex (By similarity). Thereby, regulates retrograde transport from endosomes to the Golgi apparatus of these lysosomal sorting receptors and plays a role in trafficking of lysosomal proteins (By similarity). In the nervous system, catalyzes the palmitoylation of DLG4/PSD95 and regulates its synaptic clustering and function in synaptogenesis (PubMed:31189538). Could be involved in the differentiation of dopaminergic neurons and the development of the diencephalon (By similarity). Could also catalyze the palmitoylation of GAP43 (By similarity). Could also palmitoylate DNAJC5 and regulate its localization to the Golgi membrane (By similarity). Could also palmitoylate FYN as shown in vitro (By similarity). May palmitoylate CALHM3 subunit of gustatory voltage-gated ion channels and modulate channel gating and kinetics.</text>
</comment>
<comment type="catalytic activity">
    <reaction evidence="8">
        <text>L-cysteinyl-[protein] + hexadecanoyl-CoA = S-hexadecanoyl-L-cysteinyl-[protein] + CoA</text>
        <dbReference type="Rhea" id="RHEA:36683"/>
        <dbReference type="Rhea" id="RHEA-COMP:10131"/>
        <dbReference type="Rhea" id="RHEA-COMP:11032"/>
        <dbReference type="ChEBI" id="CHEBI:29950"/>
        <dbReference type="ChEBI" id="CHEBI:57287"/>
        <dbReference type="ChEBI" id="CHEBI:57379"/>
        <dbReference type="ChEBI" id="CHEBI:74151"/>
        <dbReference type="EC" id="2.3.1.225"/>
    </reaction>
    <physiologicalReaction direction="left-to-right" evidence="8">
        <dbReference type="Rhea" id="RHEA:36684"/>
    </physiologicalReaction>
</comment>
<comment type="catalytic activity">
    <reaction evidence="2">
        <text>L-cysteinyl-[protein] + tetradecanoyl-CoA = S-tetradecanoyl-L-cysteinyl-[protein] + CoA</text>
        <dbReference type="Rhea" id="RHEA:59736"/>
        <dbReference type="Rhea" id="RHEA-COMP:10131"/>
        <dbReference type="Rhea" id="RHEA-COMP:15433"/>
        <dbReference type="ChEBI" id="CHEBI:29950"/>
        <dbReference type="ChEBI" id="CHEBI:57287"/>
        <dbReference type="ChEBI" id="CHEBI:57385"/>
        <dbReference type="ChEBI" id="CHEBI:143199"/>
    </reaction>
    <physiologicalReaction direction="left-to-right" evidence="2">
        <dbReference type="Rhea" id="RHEA:59737"/>
    </physiologicalReaction>
</comment>
<comment type="catalytic activity">
    <reaction evidence="2">
        <text>L-cysteinyl-[protein] + octadecanoyl-CoA = S-octadecanoyl-L-cysteinyl-[protein] + CoA</text>
        <dbReference type="Rhea" id="RHEA:59740"/>
        <dbReference type="Rhea" id="RHEA-COMP:10131"/>
        <dbReference type="Rhea" id="RHEA-COMP:15434"/>
        <dbReference type="ChEBI" id="CHEBI:29950"/>
        <dbReference type="ChEBI" id="CHEBI:57287"/>
        <dbReference type="ChEBI" id="CHEBI:57394"/>
        <dbReference type="ChEBI" id="CHEBI:143200"/>
    </reaction>
    <physiologicalReaction direction="left-to-right" evidence="2">
        <dbReference type="Rhea" id="RHEA:59741"/>
    </physiologicalReaction>
</comment>
<comment type="subcellular location">
    <subcellularLocation>
        <location evidence="6">Golgi apparatus membrane</location>
        <topology evidence="1">Multi-pass membrane protein</topology>
    </subcellularLocation>
    <subcellularLocation>
        <location evidence="6">Postsynaptic density</location>
    </subcellularLocation>
</comment>
<comment type="tissue specificity">
    <text evidence="6">In brain, expressed in both excitatory and inhibitory neurons but not expressed by glial cells.</text>
</comment>
<comment type="developmental stage">
    <text evidence="6">Highly expressed during early stages of development at 17 dpc and postnatal day 10 (P10) but significantly reduced in the adult brain.</text>
</comment>
<comment type="domain">
    <text evidence="2">The DHHC domain is required for palmitoyltransferase activity.</text>
</comment>
<comment type="PTM">
    <text evidence="1">Autopalmitoylated (in vitro).</text>
</comment>
<comment type="similarity">
    <text evidence="7">Belongs to the DHHC palmitoyltransferase family.</text>
</comment>
<organism>
    <name type="scientific">Rattus norvegicus</name>
    <name type="common">Rat</name>
    <dbReference type="NCBI Taxonomy" id="10116"/>
    <lineage>
        <taxon>Eukaryota</taxon>
        <taxon>Metazoa</taxon>
        <taxon>Chordata</taxon>
        <taxon>Craniata</taxon>
        <taxon>Vertebrata</taxon>
        <taxon>Euteleostomi</taxon>
        <taxon>Mammalia</taxon>
        <taxon>Eutheria</taxon>
        <taxon>Euarchontoglires</taxon>
        <taxon>Glires</taxon>
        <taxon>Rodentia</taxon>
        <taxon>Myomorpha</taxon>
        <taxon>Muroidea</taxon>
        <taxon>Muridae</taxon>
        <taxon>Murinae</taxon>
        <taxon>Rattus</taxon>
    </lineage>
</organism>
<name>ZDH15_RAT</name>
<dbReference type="EC" id="2.3.1.225" evidence="8"/>
<dbReference type="EC" id="2.3.1.-" evidence="2"/>
<dbReference type="EMBL" id="AY886531">
    <property type="protein sequence ID" value="AAX73393.1"/>
    <property type="molecule type" value="mRNA"/>
</dbReference>
<dbReference type="RefSeq" id="NP_001034190.1">
    <property type="nucleotide sequence ID" value="NM_001039101.1"/>
</dbReference>
<dbReference type="RefSeq" id="XP_006257207.1">
    <property type="nucleotide sequence ID" value="XM_006257145.5"/>
</dbReference>
<dbReference type="SMR" id="Q2TGJ4"/>
<dbReference type="FunCoup" id="Q2TGJ4">
    <property type="interactions" value="1052"/>
</dbReference>
<dbReference type="STRING" id="10116.ENSRNOP00000003714"/>
<dbReference type="PhosphoSitePlus" id="Q2TGJ4"/>
<dbReference type="PaxDb" id="10116-ENSRNOP00000003714"/>
<dbReference type="Ensembl" id="ENSRNOT00000003714.6">
    <property type="protein sequence ID" value="ENSRNOP00000003714.5"/>
    <property type="gene ID" value="ENSRNOG00000002751.7"/>
</dbReference>
<dbReference type="GeneID" id="317235"/>
<dbReference type="KEGG" id="rno:317235"/>
<dbReference type="UCSC" id="RGD:1562075">
    <property type="organism name" value="rat"/>
</dbReference>
<dbReference type="AGR" id="RGD:1562075"/>
<dbReference type="CTD" id="158866"/>
<dbReference type="RGD" id="1562075">
    <property type="gene designation" value="Zdhhc15"/>
</dbReference>
<dbReference type="eggNOG" id="KOG1315">
    <property type="taxonomic scope" value="Eukaryota"/>
</dbReference>
<dbReference type="GeneTree" id="ENSGT00940000158214"/>
<dbReference type="HOGENOM" id="CLU_027721_1_1_1"/>
<dbReference type="InParanoid" id="Q2TGJ4"/>
<dbReference type="OMA" id="NCYSSFP"/>
<dbReference type="OrthoDB" id="9909019at2759"/>
<dbReference type="PhylomeDB" id="Q2TGJ4"/>
<dbReference type="TreeFam" id="TF316044"/>
<dbReference type="PRO" id="PR:Q2TGJ4"/>
<dbReference type="Proteomes" id="UP000002494">
    <property type="component" value="Chromosome X"/>
</dbReference>
<dbReference type="Bgee" id="ENSRNOG00000002751">
    <property type="expression patterns" value="Expressed in liver and 16 other cell types or tissues"/>
</dbReference>
<dbReference type="GO" id="GO:0005783">
    <property type="term" value="C:endoplasmic reticulum"/>
    <property type="evidence" value="ECO:0000318"/>
    <property type="project" value="GO_Central"/>
</dbReference>
<dbReference type="GO" id="GO:0005794">
    <property type="term" value="C:Golgi apparatus"/>
    <property type="evidence" value="ECO:0000266"/>
    <property type="project" value="RGD"/>
</dbReference>
<dbReference type="GO" id="GO:0000139">
    <property type="term" value="C:Golgi membrane"/>
    <property type="evidence" value="ECO:0000314"/>
    <property type="project" value="UniProtKB"/>
</dbReference>
<dbReference type="GO" id="GO:0098794">
    <property type="term" value="C:postsynapse"/>
    <property type="evidence" value="ECO:0000314"/>
    <property type="project" value="UniProtKB"/>
</dbReference>
<dbReference type="GO" id="GO:0014069">
    <property type="term" value="C:postsynaptic density"/>
    <property type="evidence" value="ECO:0007669"/>
    <property type="project" value="UniProtKB-SubCell"/>
</dbReference>
<dbReference type="GO" id="GO:0016409">
    <property type="term" value="F:palmitoyltransferase activity"/>
    <property type="evidence" value="ECO:0000266"/>
    <property type="project" value="RGD"/>
</dbReference>
<dbReference type="GO" id="GO:0019705">
    <property type="term" value="F:protein-cysteine S-myristoyltransferase activity"/>
    <property type="evidence" value="ECO:0007669"/>
    <property type="project" value="RHEA"/>
</dbReference>
<dbReference type="GO" id="GO:0019706">
    <property type="term" value="F:protein-cysteine S-palmitoyltransferase activity"/>
    <property type="evidence" value="ECO:0000250"/>
    <property type="project" value="UniProtKB"/>
</dbReference>
<dbReference type="GO" id="GO:0140439">
    <property type="term" value="F:protein-cysteine S-stearoyltransferase activity"/>
    <property type="evidence" value="ECO:0007669"/>
    <property type="project" value="RHEA"/>
</dbReference>
<dbReference type="GO" id="GO:0008270">
    <property type="term" value="F:zinc ion binding"/>
    <property type="evidence" value="ECO:0000250"/>
    <property type="project" value="UniProtKB"/>
</dbReference>
<dbReference type="GO" id="GO:0045184">
    <property type="term" value="P:establishment of protein localization"/>
    <property type="evidence" value="ECO:0000266"/>
    <property type="project" value="RGD"/>
</dbReference>
<dbReference type="GO" id="GO:0018230">
    <property type="term" value="P:peptidyl-L-cysteine S-palmitoylation"/>
    <property type="evidence" value="ECO:0000250"/>
    <property type="project" value="UniProtKB"/>
</dbReference>
<dbReference type="GO" id="GO:1900006">
    <property type="term" value="P:positive regulation of dendrite development"/>
    <property type="evidence" value="ECO:0000315"/>
    <property type="project" value="UniProtKB"/>
</dbReference>
<dbReference type="GO" id="GO:0072657">
    <property type="term" value="P:protein localization to membrane"/>
    <property type="evidence" value="ECO:0000250"/>
    <property type="project" value="UniProtKB"/>
</dbReference>
<dbReference type="GO" id="GO:0062237">
    <property type="term" value="P:protein localization to postsynapse"/>
    <property type="evidence" value="ECO:0000315"/>
    <property type="project" value="UniProtKB"/>
</dbReference>
<dbReference type="GO" id="GO:0140450">
    <property type="term" value="P:protein targeting to Golgi apparatus"/>
    <property type="evidence" value="ECO:0000250"/>
    <property type="project" value="UniProtKB"/>
</dbReference>
<dbReference type="GO" id="GO:0006612">
    <property type="term" value="P:protein targeting to membrane"/>
    <property type="evidence" value="ECO:0000318"/>
    <property type="project" value="GO_Central"/>
</dbReference>
<dbReference type="GO" id="GO:0061001">
    <property type="term" value="P:regulation of dendritic spine morphogenesis"/>
    <property type="evidence" value="ECO:0000315"/>
    <property type="project" value="UniProtKB"/>
</dbReference>
<dbReference type="GO" id="GO:0016188">
    <property type="term" value="P:synaptic vesicle maturation"/>
    <property type="evidence" value="ECO:0000266"/>
    <property type="project" value="RGD"/>
</dbReference>
<dbReference type="InterPro" id="IPR001594">
    <property type="entry name" value="Palmitoyltrfase_DHHC"/>
</dbReference>
<dbReference type="InterPro" id="IPR039859">
    <property type="entry name" value="PFA4/ZDH16/20/ERF2-like"/>
</dbReference>
<dbReference type="PANTHER" id="PTHR12246">
    <property type="entry name" value="PALMITOYLTRANSFERASE ZDHHC16"/>
    <property type="match status" value="1"/>
</dbReference>
<dbReference type="Pfam" id="PF01529">
    <property type="entry name" value="DHHC"/>
    <property type="match status" value="1"/>
</dbReference>
<dbReference type="PROSITE" id="PS50216">
    <property type="entry name" value="DHHC"/>
    <property type="match status" value="1"/>
</dbReference>
<protein>
    <recommendedName>
        <fullName evidence="7">Palmitoyltransferase ZDHHC15</fullName>
        <ecNumber evidence="8">2.3.1.225</ecNumber>
    </recommendedName>
    <alternativeName>
        <fullName evidence="2">Acyltransferase ZDHHC15</fullName>
        <ecNumber evidence="2">2.3.1.-</ecNumber>
    </alternativeName>
    <alternativeName>
        <fullName>Zinc finger DHHC domain-containing protein 15</fullName>
        <shortName>DHHC-15</shortName>
    </alternativeName>
</protein>
<gene>
    <name evidence="9" type="primary">Zdhhc15</name>
</gene>
<evidence type="ECO:0000250" key="1">
    <source>
        <dbReference type="UniProtKB" id="F1QXD3"/>
    </source>
</evidence>
<evidence type="ECO:0000250" key="2">
    <source>
        <dbReference type="UniProtKB" id="Q8BGJ0"/>
    </source>
</evidence>
<evidence type="ECO:0000250" key="3">
    <source>
        <dbReference type="UniProtKB" id="Q96MV8"/>
    </source>
</evidence>
<evidence type="ECO:0000255" key="4">
    <source>
        <dbReference type="PROSITE-ProRule" id="PRU00067"/>
    </source>
</evidence>
<evidence type="ECO:0000256" key="5">
    <source>
        <dbReference type="SAM" id="MobiDB-lite"/>
    </source>
</evidence>
<evidence type="ECO:0000269" key="6">
    <source>
    </source>
</evidence>
<evidence type="ECO:0000305" key="7"/>
<evidence type="ECO:0000305" key="8">
    <source>
    </source>
</evidence>
<evidence type="ECO:0000312" key="9">
    <source>
        <dbReference type="RGD" id="1562075"/>
    </source>
</evidence>
<keyword id="KW-0012">Acyltransferase</keyword>
<keyword id="KW-0333">Golgi apparatus</keyword>
<keyword id="KW-0449">Lipoprotein</keyword>
<keyword id="KW-0472">Membrane</keyword>
<keyword id="KW-0479">Metal-binding</keyword>
<keyword id="KW-0564">Palmitate</keyword>
<keyword id="KW-1185">Reference proteome</keyword>
<keyword id="KW-0770">Synapse</keyword>
<keyword id="KW-0808">Transferase</keyword>
<keyword id="KW-0812">Transmembrane</keyword>
<keyword id="KW-1133">Transmembrane helix</keyword>
<keyword id="KW-0862">Zinc</keyword>